<evidence type="ECO:0000256" key="1">
    <source>
        <dbReference type="SAM" id="MobiDB-lite"/>
    </source>
</evidence>
<evidence type="ECO:0000269" key="2">
    <source>
    </source>
</evidence>
<evidence type="ECO:0000269" key="3">
    <source>
    </source>
</evidence>
<evidence type="ECO:0000269" key="4">
    <source>
    </source>
</evidence>
<evidence type="ECO:0000269" key="5">
    <source>
    </source>
</evidence>
<evidence type="ECO:0000269" key="6">
    <source>
    </source>
</evidence>
<evidence type="ECO:0000303" key="7">
    <source>
    </source>
</evidence>
<evidence type="ECO:0000303" key="8">
    <source>
    </source>
</evidence>
<evidence type="ECO:0000305" key="9"/>
<evidence type="ECO:0000312" key="10">
    <source>
        <dbReference type="EMBL" id="AAM29520.1"/>
    </source>
</evidence>
<evidence type="ECO:0000312" key="11">
    <source>
        <dbReference type="EMBL" id="CAB70603.1"/>
    </source>
</evidence>
<evidence type="ECO:0000312" key="12">
    <source>
        <dbReference type="FlyBase" id="FBgn0043001"/>
    </source>
</evidence>
<evidence type="ECO:0000312" key="13">
    <source>
        <dbReference type="Proteomes" id="UP000000803"/>
    </source>
</evidence>
<evidence type="ECO:0007744" key="14">
    <source>
        <dbReference type="PDB" id="2BYK"/>
    </source>
</evidence>
<evidence type="ECO:0007744" key="15">
    <source>
        <dbReference type="PDB" id="2BYM"/>
    </source>
</evidence>
<evidence type="ECO:0007829" key="16">
    <source>
        <dbReference type="PDB" id="2BYK"/>
    </source>
</evidence>
<comment type="function">
    <text evidence="3 4 5 6">Histone-like protein which promotes nucleosome sliding of ATP-dependent nucleosome remodeling complexes (PubMed:10856248, PubMed:11447119). Part of the chromatin-accessibility complex (CHRAC) which uses energy/ATP to increase the general accessibility of DNA in chromatin (PubMed:10856248, PubMed:11447119). As a heterodimer with Chrac-14, binds DNA and facilitates nucleosome sliding by Acf (PubMed:16260604). As part of the CHRAC complex, required for oogenesis (PubMed:26851213).</text>
</comment>
<comment type="subunit">
    <text evidence="2 3 5">Component of the chromatin accessibility complex (CHRAC), composed of Chrac-14, Chrac-16, Acf and Iswi (PubMed:10731132, PubMed:10856248). Forms a heterodimer with Chrac-14 (PubMed:10856248, PubMed:16260604). The Chrac-14/Chrac-16 heterodimer interacts with Acf (via N-terminus) (PubMed:16260604). Stabilizes the interaction between Chrac-14 and Iswi (PubMed:10856248).</text>
</comment>
<comment type="interaction">
    <interactant intactId="EBI-193917">
        <id>Q9V452</id>
    </interactant>
    <interactant intactId="EBI-138718">
        <id>Q9V444</id>
        <label>Chrac-14</label>
    </interactant>
    <organismsDiffer>false</organismsDiffer>
    <experiments>11</experiments>
</comment>
<comment type="subcellular location">
    <subcellularLocation>
        <location evidence="3 4">Nucleus</location>
    </subcellularLocation>
</comment>
<comment type="developmental stage">
    <text evidence="3 6">Expressed in nurse cells and oocytes of all stages (PubMed:26851213). Expressed in oocytes and embryos and down-regulated afterwards (PubMed:10856248).</text>
</comment>
<feature type="chain" id="PRO_0000448482" description="Chromatin accessibility complex 16kD protein">
    <location>
        <begin position="1"/>
        <end position="140"/>
    </location>
</feature>
<feature type="region of interest" description="Disordered" evidence="1">
    <location>
        <begin position="111"/>
        <end position="140"/>
    </location>
</feature>
<feature type="compositionally biased region" description="Acidic residues" evidence="1">
    <location>
        <begin position="117"/>
        <end position="140"/>
    </location>
</feature>
<feature type="mutagenesis site" description="When in a heterodimer with Chrac-14, does not affect DNA binding or Acf nucleosome sliding activity." evidence="5">
    <location>
        <begin position="2"/>
        <end position="18"/>
    </location>
</feature>
<feature type="mutagenesis site" description="When in a heterodimer with Chrac-14, enhances DNA binding." evidence="5">
    <location>
        <begin position="118"/>
        <end position="140"/>
    </location>
</feature>
<feature type="strand" evidence="16">
    <location>
        <begin position="31"/>
        <end position="34"/>
    </location>
</feature>
<feature type="helix" evidence="16">
    <location>
        <begin position="40"/>
        <end position="66"/>
    </location>
</feature>
<feature type="helix" evidence="16">
    <location>
        <begin position="76"/>
        <end position="84"/>
    </location>
</feature>
<feature type="helix" evidence="16">
    <location>
        <begin position="90"/>
        <end position="92"/>
    </location>
</feature>
<feature type="turn" evidence="16">
    <location>
        <begin position="93"/>
        <end position="95"/>
    </location>
</feature>
<dbReference type="EMBL" id="AJ271142">
    <property type="protein sequence ID" value="CAB70603.1"/>
    <property type="molecule type" value="mRNA"/>
</dbReference>
<dbReference type="EMBL" id="AE014298">
    <property type="protein sequence ID" value="AAF48131.1"/>
    <property type="molecule type" value="Genomic_DNA"/>
</dbReference>
<dbReference type="EMBL" id="AE014298">
    <property type="protein sequence ID" value="AHN59618.1"/>
    <property type="molecule type" value="Genomic_DNA"/>
</dbReference>
<dbReference type="EMBL" id="AY113515">
    <property type="protein sequence ID" value="AAM29520.1"/>
    <property type="molecule type" value="mRNA"/>
</dbReference>
<dbReference type="RefSeq" id="NP_001285148.1">
    <property type="nucleotide sequence ID" value="NM_001298219.1"/>
</dbReference>
<dbReference type="RefSeq" id="NP_572776.1">
    <property type="nucleotide sequence ID" value="NM_132548.3"/>
</dbReference>
<dbReference type="PDB" id="2BYK">
    <property type="method" value="X-ray"/>
    <property type="resolution" value="2.40 A"/>
    <property type="chains" value="A/C=1-140"/>
</dbReference>
<dbReference type="PDB" id="2BYM">
    <property type="method" value="X-ray"/>
    <property type="resolution" value="2.80 A"/>
    <property type="chains" value="A/C=1-140"/>
</dbReference>
<dbReference type="PDBsum" id="2BYK"/>
<dbReference type="PDBsum" id="2BYM"/>
<dbReference type="SMR" id="Q9V452"/>
<dbReference type="ComplexPortal" id="CPX-2775">
    <property type="entry name" value="CHRAC chromatin remodeling complex"/>
</dbReference>
<dbReference type="DIP" id="DIP-20460N"/>
<dbReference type="FunCoup" id="Q9V452">
    <property type="interactions" value="1419"/>
</dbReference>
<dbReference type="IntAct" id="Q9V452">
    <property type="interactions" value="5"/>
</dbReference>
<dbReference type="STRING" id="7227.FBpp0308688"/>
<dbReference type="PaxDb" id="7227-FBpp0073475"/>
<dbReference type="DNASU" id="32166"/>
<dbReference type="EnsemblMetazoa" id="FBtr0073642">
    <property type="protein sequence ID" value="FBpp0073475"/>
    <property type="gene ID" value="FBgn0043001"/>
</dbReference>
<dbReference type="EnsemblMetazoa" id="FBtr0339625">
    <property type="protein sequence ID" value="FBpp0308688"/>
    <property type="gene ID" value="FBgn0043001"/>
</dbReference>
<dbReference type="GeneID" id="32166"/>
<dbReference type="KEGG" id="dme:Dmel_CG15736"/>
<dbReference type="UCSC" id="CG15736-RA">
    <property type="organism name" value="d. melanogaster"/>
</dbReference>
<dbReference type="AGR" id="FB:FBgn0043001"/>
<dbReference type="CTD" id="32166"/>
<dbReference type="FlyBase" id="FBgn0043001">
    <property type="gene designation" value="Chrac-16"/>
</dbReference>
<dbReference type="VEuPathDB" id="VectorBase:FBgn0043001"/>
<dbReference type="eggNOG" id="KOG1657">
    <property type="taxonomic scope" value="Eukaryota"/>
</dbReference>
<dbReference type="GeneTree" id="ENSGT00940000166127"/>
<dbReference type="HOGENOM" id="CLU_045277_11_3_1"/>
<dbReference type="InParanoid" id="Q9V452"/>
<dbReference type="OMA" id="FLEYKHI"/>
<dbReference type="OrthoDB" id="1291358at2759"/>
<dbReference type="PhylomeDB" id="Q9V452"/>
<dbReference type="BioGRID-ORCS" id="32166">
    <property type="hits" value="0 hits in 1 CRISPR screen"/>
</dbReference>
<dbReference type="ChiTaRS" id="Chrac-16">
    <property type="organism name" value="fly"/>
</dbReference>
<dbReference type="EvolutionaryTrace" id="Q9V452"/>
<dbReference type="GenomeRNAi" id="32166"/>
<dbReference type="PRO" id="PR:Q9V452"/>
<dbReference type="Proteomes" id="UP000000803">
    <property type="component" value="Chromosome X"/>
</dbReference>
<dbReference type="Bgee" id="FBgn0043001">
    <property type="expression patterns" value="Expressed in secondary oocyte and 58 other cell types or tissues"/>
</dbReference>
<dbReference type="GO" id="GO:0008623">
    <property type="term" value="C:CHRAC"/>
    <property type="evidence" value="ECO:0000314"/>
    <property type="project" value="FlyBase"/>
</dbReference>
<dbReference type="GO" id="GO:0005634">
    <property type="term" value="C:nucleus"/>
    <property type="evidence" value="ECO:0000318"/>
    <property type="project" value="GO_Central"/>
</dbReference>
<dbReference type="GO" id="GO:0060090">
    <property type="term" value="F:molecular adaptor activity"/>
    <property type="evidence" value="ECO:0000269"/>
    <property type="project" value="DisProt"/>
</dbReference>
<dbReference type="GO" id="GO:0003676">
    <property type="term" value="F:nucleic acid binding"/>
    <property type="evidence" value="ECO:0000269"/>
    <property type="project" value="DisProt"/>
</dbReference>
<dbReference type="GO" id="GO:0046982">
    <property type="term" value="F:protein heterodimerization activity"/>
    <property type="evidence" value="ECO:0007669"/>
    <property type="project" value="InterPro"/>
</dbReference>
<dbReference type="GO" id="GO:0006338">
    <property type="term" value="P:chromatin remodeling"/>
    <property type="evidence" value="ECO:0000314"/>
    <property type="project" value="FlyBase"/>
</dbReference>
<dbReference type="GO" id="GO:0006261">
    <property type="term" value="P:DNA-templated DNA replication"/>
    <property type="evidence" value="ECO:0000318"/>
    <property type="project" value="GO_Central"/>
</dbReference>
<dbReference type="CDD" id="cd22924">
    <property type="entry name" value="HFD_CHRAC1-like"/>
    <property type="match status" value="1"/>
</dbReference>
<dbReference type="DisProt" id="DP00811"/>
<dbReference type="FunFam" id="1.10.20.10:FF:000145">
    <property type="entry name" value="Chromatin accessibility complex protein 1-like Protein"/>
    <property type="match status" value="1"/>
</dbReference>
<dbReference type="Gene3D" id="1.10.20.10">
    <property type="entry name" value="Histone, subunit A"/>
    <property type="match status" value="1"/>
</dbReference>
<dbReference type="InterPro" id="IPR003958">
    <property type="entry name" value="CBFA_NFYB_domain"/>
</dbReference>
<dbReference type="InterPro" id="IPR009072">
    <property type="entry name" value="Histone-fold"/>
</dbReference>
<dbReference type="InterPro" id="IPR050568">
    <property type="entry name" value="Transcr_DNA_Rep_Reg"/>
</dbReference>
<dbReference type="PANTHER" id="PTHR10252:SF54">
    <property type="entry name" value="CHROMATIN ACCESSIBILITY COMPLEX PROTEIN 1"/>
    <property type="match status" value="1"/>
</dbReference>
<dbReference type="PANTHER" id="PTHR10252">
    <property type="entry name" value="HISTONE-LIKE TRANSCRIPTION FACTOR CCAAT-RELATED"/>
    <property type="match status" value="1"/>
</dbReference>
<dbReference type="Pfam" id="PF00808">
    <property type="entry name" value="CBFD_NFYB_HMF"/>
    <property type="match status" value="1"/>
</dbReference>
<dbReference type="SUPFAM" id="SSF47113">
    <property type="entry name" value="Histone-fold"/>
    <property type="match status" value="1"/>
</dbReference>
<name>CHRC_DROME</name>
<keyword id="KW-0002">3D-structure</keyword>
<keyword id="KW-0903">Direct protein sequencing</keyword>
<keyword id="KW-0539">Nucleus</keyword>
<keyword id="KW-1185">Reference proteome</keyword>
<gene>
    <name evidence="7 12" type="primary">Chrac-16</name>
    <name evidence="12" type="synonym">CHRAC</name>
    <name evidence="8 12" type="synonym">CHRAC16</name>
    <name evidence="12" type="synonym">joey</name>
    <name evidence="12" type="ORF">CG15736</name>
</gene>
<protein>
    <recommendedName>
        <fullName evidence="12">Chromatin accessibility complex 16kD protein</fullName>
    </recommendedName>
</protein>
<organism evidence="13">
    <name type="scientific">Drosophila melanogaster</name>
    <name type="common">Fruit fly</name>
    <dbReference type="NCBI Taxonomy" id="7227"/>
    <lineage>
        <taxon>Eukaryota</taxon>
        <taxon>Metazoa</taxon>
        <taxon>Ecdysozoa</taxon>
        <taxon>Arthropoda</taxon>
        <taxon>Hexapoda</taxon>
        <taxon>Insecta</taxon>
        <taxon>Pterygota</taxon>
        <taxon>Neoptera</taxon>
        <taxon>Endopterygota</taxon>
        <taxon>Diptera</taxon>
        <taxon>Brachycera</taxon>
        <taxon>Muscomorpha</taxon>
        <taxon>Ephydroidea</taxon>
        <taxon>Drosophilidae</taxon>
        <taxon>Drosophila</taxon>
        <taxon>Sophophora</taxon>
    </lineage>
</organism>
<sequence length="140" mass="16003">MGEPRSQPPVERPPTAETFLPLSRVRTIMKSSMDTGLITNEVLFLMTKCTELFVRHLAGAAYTEEFGQRPGEALKYEHLSQVVNKNKNLEFLLQIVPQKIRVHQFQEMLRLNRSAGSDDDDDDDDDDDEEESESESESDE</sequence>
<accession>Q9V452</accession>
<reference evidence="11" key="1">
    <citation type="journal article" date="2000" name="EMBO J.">
        <title>Two histone fold proteins, CHRAC-14 and CHRAC-16, are developmentally regulated subunits of chromatin accessibility complex (CHRAC).</title>
        <authorList>
            <person name="Corona D.F."/>
            <person name="Eberharter A."/>
            <person name="Budde A."/>
            <person name="Deuring R."/>
            <person name="Ferrari S."/>
            <person name="Varga-Weisz P."/>
            <person name="Wilm M."/>
            <person name="Tamkun J."/>
            <person name="Becker P.B."/>
        </authorList>
    </citation>
    <scope>NUCLEOTIDE SEQUENCE [MRNA]</scope>
    <scope>PROTEIN SEQUENCE OF 6-23 AND 51-55</scope>
    <scope>IDENTIFICATION BY MASS SPECTROMETRY</scope>
    <scope>FUNCTION</scope>
    <scope>IDENTIFICATION IN THE CHRAC COMPLEX</scope>
    <scope>INTERACTION WITH CHRAC-14</scope>
    <scope>SUBCELLULAR LOCATION</scope>
    <scope>DEVELOPMENTAL STAGE</scope>
</reference>
<reference evidence="13" key="2">
    <citation type="journal article" date="2000" name="Science">
        <title>The genome sequence of Drosophila melanogaster.</title>
        <authorList>
            <person name="Adams M.D."/>
            <person name="Celniker S.E."/>
            <person name="Holt R.A."/>
            <person name="Evans C.A."/>
            <person name="Gocayne J.D."/>
            <person name="Amanatides P.G."/>
            <person name="Scherer S.E."/>
            <person name="Li P.W."/>
            <person name="Hoskins R.A."/>
            <person name="Galle R.F."/>
            <person name="George R.A."/>
            <person name="Lewis S.E."/>
            <person name="Richards S."/>
            <person name="Ashburner M."/>
            <person name="Henderson S.N."/>
            <person name="Sutton G.G."/>
            <person name="Wortman J.R."/>
            <person name="Yandell M.D."/>
            <person name="Zhang Q."/>
            <person name="Chen L.X."/>
            <person name="Brandon R.C."/>
            <person name="Rogers Y.-H.C."/>
            <person name="Blazej R.G."/>
            <person name="Champe M."/>
            <person name="Pfeiffer B.D."/>
            <person name="Wan K.H."/>
            <person name="Doyle C."/>
            <person name="Baxter E.G."/>
            <person name="Helt G."/>
            <person name="Nelson C.R."/>
            <person name="Miklos G.L.G."/>
            <person name="Abril J.F."/>
            <person name="Agbayani A."/>
            <person name="An H.-J."/>
            <person name="Andrews-Pfannkoch C."/>
            <person name="Baldwin D."/>
            <person name="Ballew R.M."/>
            <person name="Basu A."/>
            <person name="Baxendale J."/>
            <person name="Bayraktaroglu L."/>
            <person name="Beasley E.M."/>
            <person name="Beeson K.Y."/>
            <person name="Benos P.V."/>
            <person name="Berman B.P."/>
            <person name="Bhandari D."/>
            <person name="Bolshakov S."/>
            <person name="Borkova D."/>
            <person name="Botchan M.R."/>
            <person name="Bouck J."/>
            <person name="Brokstein P."/>
            <person name="Brottier P."/>
            <person name="Burtis K.C."/>
            <person name="Busam D.A."/>
            <person name="Butler H."/>
            <person name="Cadieu E."/>
            <person name="Center A."/>
            <person name="Chandra I."/>
            <person name="Cherry J.M."/>
            <person name="Cawley S."/>
            <person name="Dahlke C."/>
            <person name="Davenport L.B."/>
            <person name="Davies P."/>
            <person name="de Pablos B."/>
            <person name="Delcher A."/>
            <person name="Deng Z."/>
            <person name="Mays A.D."/>
            <person name="Dew I."/>
            <person name="Dietz S.M."/>
            <person name="Dodson K."/>
            <person name="Doup L.E."/>
            <person name="Downes M."/>
            <person name="Dugan-Rocha S."/>
            <person name="Dunkov B.C."/>
            <person name="Dunn P."/>
            <person name="Durbin K.J."/>
            <person name="Evangelista C.C."/>
            <person name="Ferraz C."/>
            <person name="Ferriera S."/>
            <person name="Fleischmann W."/>
            <person name="Fosler C."/>
            <person name="Gabrielian A.E."/>
            <person name="Garg N.S."/>
            <person name="Gelbart W.M."/>
            <person name="Glasser K."/>
            <person name="Glodek A."/>
            <person name="Gong F."/>
            <person name="Gorrell J.H."/>
            <person name="Gu Z."/>
            <person name="Guan P."/>
            <person name="Harris M."/>
            <person name="Harris N.L."/>
            <person name="Harvey D.A."/>
            <person name="Heiman T.J."/>
            <person name="Hernandez J.R."/>
            <person name="Houck J."/>
            <person name="Hostin D."/>
            <person name="Houston K.A."/>
            <person name="Howland T.J."/>
            <person name="Wei M.-H."/>
            <person name="Ibegwam C."/>
            <person name="Jalali M."/>
            <person name="Kalush F."/>
            <person name="Karpen G.H."/>
            <person name="Ke Z."/>
            <person name="Kennison J.A."/>
            <person name="Ketchum K.A."/>
            <person name="Kimmel B.E."/>
            <person name="Kodira C.D."/>
            <person name="Kraft C.L."/>
            <person name="Kravitz S."/>
            <person name="Kulp D."/>
            <person name="Lai Z."/>
            <person name="Lasko P."/>
            <person name="Lei Y."/>
            <person name="Levitsky A.A."/>
            <person name="Li J.H."/>
            <person name="Li Z."/>
            <person name="Liang Y."/>
            <person name="Lin X."/>
            <person name="Liu X."/>
            <person name="Mattei B."/>
            <person name="McIntosh T.C."/>
            <person name="McLeod M.P."/>
            <person name="McPherson D."/>
            <person name="Merkulov G."/>
            <person name="Milshina N.V."/>
            <person name="Mobarry C."/>
            <person name="Morris J."/>
            <person name="Moshrefi A."/>
            <person name="Mount S.M."/>
            <person name="Moy M."/>
            <person name="Murphy B."/>
            <person name="Murphy L."/>
            <person name="Muzny D.M."/>
            <person name="Nelson D.L."/>
            <person name="Nelson D.R."/>
            <person name="Nelson K.A."/>
            <person name="Nixon K."/>
            <person name="Nusskern D.R."/>
            <person name="Pacleb J.M."/>
            <person name="Palazzolo M."/>
            <person name="Pittman G.S."/>
            <person name="Pan S."/>
            <person name="Pollard J."/>
            <person name="Puri V."/>
            <person name="Reese M.G."/>
            <person name="Reinert K."/>
            <person name="Remington K."/>
            <person name="Saunders R.D.C."/>
            <person name="Scheeler F."/>
            <person name="Shen H."/>
            <person name="Shue B.C."/>
            <person name="Siden-Kiamos I."/>
            <person name="Simpson M."/>
            <person name="Skupski M.P."/>
            <person name="Smith T.J."/>
            <person name="Spier E."/>
            <person name="Spradling A.C."/>
            <person name="Stapleton M."/>
            <person name="Strong R."/>
            <person name="Sun E."/>
            <person name="Svirskas R."/>
            <person name="Tector C."/>
            <person name="Turner R."/>
            <person name="Venter E."/>
            <person name="Wang A.H."/>
            <person name="Wang X."/>
            <person name="Wang Z.-Y."/>
            <person name="Wassarman D.A."/>
            <person name="Weinstock G.M."/>
            <person name="Weissenbach J."/>
            <person name="Williams S.M."/>
            <person name="Woodage T."/>
            <person name="Worley K.C."/>
            <person name="Wu D."/>
            <person name="Yang S."/>
            <person name="Yao Q.A."/>
            <person name="Ye J."/>
            <person name="Yeh R.-F."/>
            <person name="Zaveri J.S."/>
            <person name="Zhan M."/>
            <person name="Zhang G."/>
            <person name="Zhao Q."/>
            <person name="Zheng L."/>
            <person name="Zheng X.H."/>
            <person name="Zhong F.N."/>
            <person name="Zhong W."/>
            <person name="Zhou X."/>
            <person name="Zhu S.C."/>
            <person name="Zhu X."/>
            <person name="Smith H.O."/>
            <person name="Gibbs R.A."/>
            <person name="Myers E.W."/>
            <person name="Rubin G.M."/>
            <person name="Venter J.C."/>
        </authorList>
    </citation>
    <scope>NUCLEOTIDE SEQUENCE [LARGE SCALE GENOMIC DNA]</scope>
    <source>
        <strain evidence="13">Berkeley</strain>
    </source>
</reference>
<reference evidence="13" key="3">
    <citation type="journal article" date="2002" name="Genome Biol.">
        <title>Annotation of the Drosophila melanogaster euchromatic genome: a systematic review.</title>
        <authorList>
            <person name="Misra S."/>
            <person name="Crosby M.A."/>
            <person name="Mungall C.J."/>
            <person name="Matthews B.B."/>
            <person name="Campbell K.S."/>
            <person name="Hradecky P."/>
            <person name="Huang Y."/>
            <person name="Kaminker J.S."/>
            <person name="Millburn G.H."/>
            <person name="Prochnik S.E."/>
            <person name="Smith C.D."/>
            <person name="Tupy J.L."/>
            <person name="Whitfield E.J."/>
            <person name="Bayraktaroglu L."/>
            <person name="Berman B.P."/>
            <person name="Bettencourt B.R."/>
            <person name="Celniker S.E."/>
            <person name="de Grey A.D.N.J."/>
            <person name="Drysdale R.A."/>
            <person name="Harris N.L."/>
            <person name="Richter J."/>
            <person name="Russo S."/>
            <person name="Schroeder A.J."/>
            <person name="Shu S.Q."/>
            <person name="Stapleton M."/>
            <person name="Yamada C."/>
            <person name="Ashburner M."/>
            <person name="Gelbart W.M."/>
            <person name="Rubin G.M."/>
            <person name="Lewis S.E."/>
        </authorList>
    </citation>
    <scope>GENOME REANNOTATION</scope>
    <source>
        <strain evidence="13">Berkeley</strain>
    </source>
</reference>
<reference evidence="10" key="4">
    <citation type="journal article" date="2002" name="Genome Biol.">
        <title>A Drosophila full-length cDNA resource.</title>
        <authorList>
            <person name="Stapleton M."/>
            <person name="Carlson J.W."/>
            <person name="Brokstein P."/>
            <person name="Yu C."/>
            <person name="Champe M."/>
            <person name="George R.A."/>
            <person name="Guarin H."/>
            <person name="Kronmiller B."/>
            <person name="Pacleb J.M."/>
            <person name="Park S."/>
            <person name="Wan K.H."/>
            <person name="Rubin G.M."/>
            <person name="Celniker S.E."/>
        </authorList>
    </citation>
    <scope>NUCLEOTIDE SEQUENCE [LARGE SCALE MRNA]</scope>
    <source>
        <strain evidence="10">Berkeley</strain>
        <tissue evidence="10">Embryo</tissue>
    </source>
</reference>
<reference evidence="9" key="5">
    <citation type="journal article" date="2001" name="EMBO J.">
        <title>Acf1, the largest subunit of CHRAC, regulates ISWI-induced nucleosome remodelling.</title>
        <authorList>
            <person name="Eberharter A."/>
            <person name="Ferrari S."/>
            <person name="Laengst G."/>
            <person name="Straub T."/>
            <person name="Imhof A."/>
            <person name="Varga-Weisz P."/>
            <person name="Wilm M."/>
            <person name="Becker P.B."/>
        </authorList>
    </citation>
    <scope>FUNCTION</scope>
    <scope>IDENTIFICATION IN THE CHRAC COMPLEX</scope>
    <scope>INTERACTION WITH CHRAC-16</scope>
    <scope>SUBCELLULAR LOCATION</scope>
</reference>
<reference evidence="9" key="6">
    <citation type="journal article" date="2016" name="Dev. Biol.">
        <title>A role for tuned levels of nucleosome remodeler subunit ACF1 during Drosophila oogenesis.</title>
        <authorList>
            <person name="Boerner K."/>
            <person name="Jain D."/>
            <person name="Vazquez-Pianzola P."/>
            <person name="Vengadasalam S."/>
            <person name="Steffen N."/>
            <person name="Fyodorov D.V."/>
            <person name="Tomancak P."/>
            <person name="Konev A."/>
            <person name="Suter B."/>
            <person name="Becker P.B."/>
        </authorList>
    </citation>
    <scope>FUNCTION</scope>
    <scope>DEVELOPMENTAL STAGE</scope>
</reference>
<reference evidence="14 15" key="7">
    <citation type="journal article" date="2005" name="Mol. Cell. Biol.">
        <title>The histone fold subunits of Drosophila CHRAC facilitate nucleosome sliding through dynamic DNA interactions.</title>
        <authorList>
            <person name="Hartlepp K.F."/>
            <person name="Fernandez-Tornero C."/>
            <person name="Eberharter A."/>
            <person name="Grune T."/>
            <person name="Muller C.W."/>
            <person name="Becker P.B."/>
        </authorList>
    </citation>
    <scope>X-RAY CRYSTALLOGRAPHY (2.40 ANGSTROMS) OF 29-100 IN COMPLEX WITH CHRAC-14</scope>
    <scope>FUNCTION</scope>
    <scope>INTERACTION WITH ACF</scope>
    <scope>MUTAGENESIS OF 2-GLY--LEU-18 AND 118-ASP--GLU-140</scope>
</reference>
<proteinExistence type="evidence at protein level"/>